<sequence>MKTIIVFLSLLVLATKFGDANEGVNQEQMKEVIQNEFREDFLNEMAPMSLLQQLEAIESTLLEKEADRNSRQKRCLGENVPCGDFPCCGKLACEKTFGYGWWYKSPFCVKPSKG</sequence>
<organism>
    <name type="scientific">Trittame loki</name>
    <name type="common">Brush-footed trapdoor spider</name>
    <dbReference type="NCBI Taxonomy" id="1295018"/>
    <lineage>
        <taxon>Eukaryota</taxon>
        <taxon>Metazoa</taxon>
        <taxon>Ecdysozoa</taxon>
        <taxon>Arthropoda</taxon>
        <taxon>Chelicerata</taxon>
        <taxon>Arachnida</taxon>
        <taxon>Araneae</taxon>
        <taxon>Mygalomorphae</taxon>
        <taxon>Barychelidae</taxon>
        <taxon>Trittame</taxon>
    </lineage>
</organism>
<protein>
    <recommendedName>
        <fullName>U17-barytoxin-Tl1d</fullName>
        <shortName>U17-BATX-Tl1d</shortName>
    </recommendedName>
    <alternativeName>
        <fullName evidence="3">Toxin ICK-40</fullName>
    </alternativeName>
</protein>
<accession>W4VS08</accession>
<proteinExistence type="evidence at transcript level"/>
<keyword id="KW-0165">Cleavage on pair of basic residues</keyword>
<keyword id="KW-1015">Disulfide bond</keyword>
<keyword id="KW-0872">Ion channel impairing toxin</keyword>
<keyword id="KW-0960">Knottin</keyword>
<keyword id="KW-0964">Secreted</keyword>
<keyword id="KW-0732">Signal</keyword>
<keyword id="KW-0800">Toxin</keyword>
<evidence type="ECO:0000250" key="1"/>
<evidence type="ECO:0000255" key="2"/>
<evidence type="ECO:0000303" key="3">
    <source>
    </source>
</evidence>
<evidence type="ECO:0000305" key="4"/>
<comment type="function">
    <text evidence="4">Ion channel inhibitor.</text>
</comment>
<comment type="subcellular location">
    <subcellularLocation>
        <location evidence="1">Secreted</location>
    </subcellularLocation>
</comment>
<comment type="tissue specificity">
    <text>Expressed by the venom gland.</text>
</comment>
<comment type="domain">
    <text evidence="1">The presence of a 'disulfide through disulfide knot' structurally defines this protein as a knottin.</text>
</comment>
<comment type="similarity">
    <text evidence="4">Belongs to the neurotoxin 14 (magi-1) family. 03 (ICK-30-40) subfamily.</text>
</comment>
<reference key="1">
    <citation type="journal article" date="2013" name="Toxins">
        <title>A proteomics and transcriptomics investigation of the venom from the barychelid spider Trittame loki (brush-foot trapdoor).</title>
        <authorList>
            <person name="Undheim E.A."/>
            <person name="Sunagar K."/>
            <person name="Herzig V."/>
            <person name="Kely L."/>
            <person name="Low D.H."/>
            <person name="Jackson T.N."/>
            <person name="Jones A."/>
            <person name="Kurniawan N."/>
            <person name="King G.F."/>
            <person name="Ali S.A."/>
            <person name="Antunes A."/>
            <person name="Ruder T."/>
            <person name="Fry B.G."/>
        </authorList>
    </citation>
    <scope>NUCLEOTIDE SEQUENCE [MRNA]</scope>
    <source>
        <tissue>Venom gland</tissue>
    </source>
</reference>
<dbReference type="EMBL" id="GAQE01000043">
    <property type="protein sequence ID" value="JAB84511.1"/>
    <property type="molecule type" value="Transcribed_RNA"/>
</dbReference>
<dbReference type="ArachnoServer" id="AS001785">
    <property type="toxin name" value="U17-barytoxin-Tl1d"/>
</dbReference>
<dbReference type="GO" id="GO:0005576">
    <property type="term" value="C:extracellular region"/>
    <property type="evidence" value="ECO:0007669"/>
    <property type="project" value="UniProtKB-SubCell"/>
</dbReference>
<dbReference type="GO" id="GO:0019871">
    <property type="term" value="F:sodium channel inhibitor activity"/>
    <property type="evidence" value="ECO:0007669"/>
    <property type="project" value="InterPro"/>
</dbReference>
<dbReference type="GO" id="GO:0090729">
    <property type="term" value="F:toxin activity"/>
    <property type="evidence" value="ECO:0007669"/>
    <property type="project" value="UniProtKB-KW"/>
</dbReference>
<dbReference type="InterPro" id="IPR012627">
    <property type="entry name" value="Toxin_22"/>
</dbReference>
<dbReference type="Pfam" id="PF08092">
    <property type="entry name" value="Toxin_22"/>
    <property type="match status" value="1"/>
</dbReference>
<name>ICK40_TRILK</name>
<feature type="signal peptide" evidence="2">
    <location>
        <begin position="1"/>
        <end position="20"/>
    </location>
</feature>
<feature type="propeptide" id="PRO_0000435163" evidence="4">
    <location>
        <begin position="21"/>
        <end position="74"/>
    </location>
</feature>
<feature type="chain" id="PRO_0000429247" description="U17-barytoxin-Tl1d">
    <location>
        <begin position="75"/>
        <end position="114"/>
    </location>
</feature>
<feature type="disulfide bond" evidence="1">
    <location>
        <begin position="75"/>
        <end position="88"/>
    </location>
</feature>
<feature type="disulfide bond" evidence="1">
    <location>
        <begin position="82"/>
        <end position="93"/>
    </location>
</feature>
<feature type="disulfide bond" evidence="1">
    <location>
        <begin position="87"/>
        <end position="108"/>
    </location>
</feature>